<keyword id="KW-0067">ATP-binding</keyword>
<keyword id="KW-0963">Cytoplasm</keyword>
<keyword id="KW-0275">Fatty acid biosynthesis</keyword>
<keyword id="KW-0276">Fatty acid metabolism</keyword>
<keyword id="KW-0444">Lipid biosynthesis</keyword>
<keyword id="KW-0443">Lipid metabolism</keyword>
<keyword id="KW-0547">Nucleotide-binding</keyword>
<keyword id="KW-1185">Reference proteome</keyword>
<keyword id="KW-0808">Transferase</keyword>
<name>ACCA_SYNS9</name>
<reference key="1">
    <citation type="submission" date="2005-08" db="EMBL/GenBank/DDBJ databases">
        <title>Complete sequence of Synechococcus sp. CC9902.</title>
        <authorList>
            <person name="Copeland A."/>
            <person name="Lucas S."/>
            <person name="Lapidus A."/>
            <person name="Barry K."/>
            <person name="Detter J.C."/>
            <person name="Glavina T."/>
            <person name="Hammon N."/>
            <person name="Israni S."/>
            <person name="Pitluck S."/>
            <person name="Martinez M."/>
            <person name="Schmutz J."/>
            <person name="Larimer F."/>
            <person name="Land M."/>
            <person name="Kyrpides N."/>
            <person name="Ivanova N."/>
            <person name="Richardson P."/>
        </authorList>
    </citation>
    <scope>NUCLEOTIDE SEQUENCE [LARGE SCALE GENOMIC DNA]</scope>
    <source>
        <strain>CC9902</strain>
    </source>
</reference>
<organism>
    <name type="scientific">Synechococcus sp. (strain CC9902)</name>
    <dbReference type="NCBI Taxonomy" id="316279"/>
    <lineage>
        <taxon>Bacteria</taxon>
        <taxon>Bacillati</taxon>
        <taxon>Cyanobacteriota</taxon>
        <taxon>Cyanophyceae</taxon>
        <taxon>Synechococcales</taxon>
        <taxon>Synechococcaceae</taxon>
        <taxon>Synechococcus</taxon>
    </lineage>
</organism>
<accession>Q3AV54</accession>
<gene>
    <name evidence="1" type="primary">accA</name>
    <name type="ordered locus">Syncc9902_1633</name>
</gene>
<proteinExistence type="inferred from homology"/>
<feature type="chain" id="PRO_1000062692" description="Acetyl-coenzyme A carboxylase carboxyl transferase subunit alpha">
    <location>
        <begin position="1"/>
        <end position="329"/>
    </location>
</feature>
<feature type="domain" description="CoA carboxyltransferase C-terminal" evidence="2">
    <location>
        <begin position="40"/>
        <end position="294"/>
    </location>
</feature>
<comment type="function">
    <text evidence="1">Component of the acetyl coenzyme A carboxylase (ACC) complex. First, biotin carboxylase catalyzes the carboxylation of biotin on its carrier protein (BCCP) and then the CO(2) group is transferred by the carboxyltransferase to acetyl-CoA to form malonyl-CoA.</text>
</comment>
<comment type="catalytic activity">
    <reaction evidence="1">
        <text>N(6)-carboxybiotinyl-L-lysyl-[protein] + acetyl-CoA = N(6)-biotinyl-L-lysyl-[protein] + malonyl-CoA</text>
        <dbReference type="Rhea" id="RHEA:54728"/>
        <dbReference type="Rhea" id="RHEA-COMP:10505"/>
        <dbReference type="Rhea" id="RHEA-COMP:10506"/>
        <dbReference type="ChEBI" id="CHEBI:57288"/>
        <dbReference type="ChEBI" id="CHEBI:57384"/>
        <dbReference type="ChEBI" id="CHEBI:83144"/>
        <dbReference type="ChEBI" id="CHEBI:83145"/>
        <dbReference type="EC" id="2.1.3.15"/>
    </reaction>
</comment>
<comment type="pathway">
    <text evidence="1">Lipid metabolism; malonyl-CoA biosynthesis; malonyl-CoA from acetyl-CoA: step 1/1.</text>
</comment>
<comment type="subunit">
    <text evidence="1">Acetyl-CoA carboxylase is a heterohexamer composed of biotin carboxyl carrier protein (AccB), biotin carboxylase (AccC) and two subunits each of ACCase subunit alpha (AccA) and ACCase subunit beta (AccD).</text>
</comment>
<comment type="subcellular location">
    <subcellularLocation>
        <location evidence="1">Cytoplasm</location>
    </subcellularLocation>
</comment>
<comment type="similarity">
    <text evidence="1">Belongs to the AccA family.</text>
</comment>
<evidence type="ECO:0000255" key="1">
    <source>
        <dbReference type="HAMAP-Rule" id="MF_00823"/>
    </source>
</evidence>
<evidence type="ECO:0000255" key="2">
    <source>
        <dbReference type="PROSITE-ProRule" id="PRU01137"/>
    </source>
</evidence>
<dbReference type="EC" id="2.1.3.15" evidence="1"/>
<dbReference type="EMBL" id="CP000097">
    <property type="protein sequence ID" value="ABB26591.1"/>
    <property type="molecule type" value="Genomic_DNA"/>
</dbReference>
<dbReference type="RefSeq" id="WP_011360402.1">
    <property type="nucleotide sequence ID" value="NC_007513.1"/>
</dbReference>
<dbReference type="SMR" id="Q3AV54"/>
<dbReference type="STRING" id="316279.Syncc9902_1633"/>
<dbReference type="KEGG" id="sye:Syncc9902_1633"/>
<dbReference type="eggNOG" id="COG0825">
    <property type="taxonomic scope" value="Bacteria"/>
</dbReference>
<dbReference type="HOGENOM" id="CLU_015486_0_2_3"/>
<dbReference type="OrthoDB" id="9808023at2"/>
<dbReference type="UniPathway" id="UPA00655">
    <property type="reaction ID" value="UER00711"/>
</dbReference>
<dbReference type="Proteomes" id="UP000002712">
    <property type="component" value="Chromosome"/>
</dbReference>
<dbReference type="GO" id="GO:0009317">
    <property type="term" value="C:acetyl-CoA carboxylase complex"/>
    <property type="evidence" value="ECO:0007669"/>
    <property type="project" value="InterPro"/>
</dbReference>
<dbReference type="GO" id="GO:0003989">
    <property type="term" value="F:acetyl-CoA carboxylase activity"/>
    <property type="evidence" value="ECO:0007669"/>
    <property type="project" value="InterPro"/>
</dbReference>
<dbReference type="GO" id="GO:0005524">
    <property type="term" value="F:ATP binding"/>
    <property type="evidence" value="ECO:0007669"/>
    <property type="project" value="UniProtKB-KW"/>
</dbReference>
<dbReference type="GO" id="GO:0016743">
    <property type="term" value="F:carboxyl- or carbamoyltransferase activity"/>
    <property type="evidence" value="ECO:0007669"/>
    <property type="project" value="UniProtKB-UniRule"/>
</dbReference>
<dbReference type="GO" id="GO:0006633">
    <property type="term" value="P:fatty acid biosynthetic process"/>
    <property type="evidence" value="ECO:0007669"/>
    <property type="project" value="UniProtKB-KW"/>
</dbReference>
<dbReference type="GO" id="GO:2001295">
    <property type="term" value="P:malonyl-CoA biosynthetic process"/>
    <property type="evidence" value="ECO:0007669"/>
    <property type="project" value="UniProtKB-UniRule"/>
</dbReference>
<dbReference type="Gene3D" id="3.90.226.10">
    <property type="entry name" value="2-enoyl-CoA Hydratase, Chain A, domain 1"/>
    <property type="match status" value="1"/>
</dbReference>
<dbReference type="HAMAP" id="MF_00823">
    <property type="entry name" value="AcetylCoA_CT_alpha"/>
    <property type="match status" value="1"/>
</dbReference>
<dbReference type="InterPro" id="IPR001095">
    <property type="entry name" value="Acetyl_CoA_COase_a_su"/>
</dbReference>
<dbReference type="InterPro" id="IPR029045">
    <property type="entry name" value="ClpP/crotonase-like_dom_sf"/>
</dbReference>
<dbReference type="InterPro" id="IPR011763">
    <property type="entry name" value="COA_CT_C"/>
</dbReference>
<dbReference type="NCBIfam" id="TIGR00513">
    <property type="entry name" value="accA"/>
    <property type="match status" value="1"/>
</dbReference>
<dbReference type="NCBIfam" id="NF041504">
    <property type="entry name" value="AccA_sub"/>
    <property type="match status" value="1"/>
</dbReference>
<dbReference type="NCBIfam" id="NF004344">
    <property type="entry name" value="PRK05724.1"/>
    <property type="match status" value="1"/>
</dbReference>
<dbReference type="PANTHER" id="PTHR42853">
    <property type="entry name" value="ACETYL-COENZYME A CARBOXYLASE CARBOXYL TRANSFERASE SUBUNIT ALPHA"/>
    <property type="match status" value="1"/>
</dbReference>
<dbReference type="PANTHER" id="PTHR42853:SF3">
    <property type="entry name" value="ACETYL-COENZYME A CARBOXYLASE CARBOXYL TRANSFERASE SUBUNIT ALPHA, CHLOROPLASTIC"/>
    <property type="match status" value="1"/>
</dbReference>
<dbReference type="Pfam" id="PF03255">
    <property type="entry name" value="ACCA"/>
    <property type="match status" value="1"/>
</dbReference>
<dbReference type="PRINTS" id="PR01069">
    <property type="entry name" value="ACCCTRFRASEA"/>
</dbReference>
<dbReference type="SUPFAM" id="SSF52096">
    <property type="entry name" value="ClpP/crotonase"/>
    <property type="match status" value="1"/>
</dbReference>
<dbReference type="PROSITE" id="PS50989">
    <property type="entry name" value="COA_CT_CTER"/>
    <property type="match status" value="1"/>
</dbReference>
<protein>
    <recommendedName>
        <fullName evidence="1">Acetyl-coenzyme A carboxylase carboxyl transferase subunit alpha</fullName>
        <shortName evidence="1">ACCase subunit alpha</shortName>
        <shortName evidence="1">Acetyl-CoA carboxylase carboxyltransferase subunit alpha</shortName>
        <ecNumber evidence="1">2.1.3.15</ecNumber>
    </recommendedName>
</protein>
<sequence length="329" mass="36347">MPRRPLLEFEKPLVELEQQIEQIRQLARDSEVDVTQQLQQLESLASRRRQEIFQGLTPAQKIQVARHPHRPSTLDFIQMFCDDFVELHGDRRGNDDQALIGGVGRLGDRAVLLLGHQKGRDTKENVARNFGMATPGGYRKAMRLMEHADRFRLPILTFIDTPGAYAGLQAEEQGQGEAIAVNLRDMFGLRVPVIATVIGEGGSGGALGIGVADRLLMFEHSVYTVASPEACASILWRDAAKAPDAAAALKITGRDLLELGVVDEVLAEPSGGNNWAPLEAGQTLRAALERHLGELLTLSEQELRDARYTKFRAMGRFAEEMSQEFDDIA</sequence>